<reference key="1">
    <citation type="journal article" date="1999" name="Genetics">
        <title>Divergence of the hyperthermophilic archaea Pyrococcus furiosus and P. horikoshii inferred from complete genomic sequences.</title>
        <authorList>
            <person name="Maeder D.L."/>
            <person name="Weiss R.B."/>
            <person name="Dunn D.M."/>
            <person name="Cherry J.L."/>
            <person name="Gonzalez J.M."/>
            <person name="DiRuggiero J."/>
            <person name="Robb F.T."/>
        </authorList>
    </citation>
    <scope>NUCLEOTIDE SEQUENCE [LARGE SCALE GENOMIC DNA]</scope>
    <source>
        <strain>ATCC 43587 / DSM 3638 / JCM 8422 / Vc1</strain>
    </source>
</reference>
<reference key="2">
    <citation type="journal article" date="2007" name="FEBS J.">
        <title>Biochemical and structural characterization of mammalian-like purine nucleoside phosphorylase from the Archaeon Pyrococcus furiosus.</title>
        <authorList>
            <person name="Cacciapuoti G."/>
            <person name="Gorassini S."/>
            <person name="Mazzeo M.F."/>
            <person name="Siciliano R.A."/>
            <person name="Carbone V."/>
            <person name="Zappia V."/>
            <person name="Porcelli M."/>
        </authorList>
    </citation>
    <scope>PROTEIN SEQUENCE OF N-TERMINUS</scope>
    <scope>FUNCTION</scope>
    <scope>CATALYTIC ACTIVITY</scope>
    <scope>BIOPHYSICOCHEMICAL PROPERTIES</scope>
    <scope>SUBUNIT</scope>
    <scope>DISULFIDE BONDS</scope>
    <scope>MUTAGENESIS OF CYS-254 AND CYS-256</scope>
</reference>
<reference key="3">
    <citation type="journal article" date="2011" name="Biochim. Biophys. Acta">
        <title>Unraveling the structural and functional differences between purine nucleoside phosphorylase and 5'-deoxy-5'-methylthioadenosine phosphorylase from the archaeon Pyrococcus furiosus.</title>
        <authorList>
            <person name="Cacciapuoti G."/>
            <person name="Marabotti A."/>
            <person name="Fuccio F."/>
            <person name="Porcelli M."/>
        </authorList>
    </citation>
    <scope>FUNCTION</scope>
    <scope>CATALYTIC ACTIVITY</scope>
    <scope>BIOPHYSICOCHEMICAL PROPERTIES</scope>
    <scope>MUTAGENESIS OF GLU-169; ASN-211; ALA-213 AND HIS-223</scope>
</reference>
<keyword id="KW-0903">Direct protein sequencing</keyword>
<keyword id="KW-1015">Disulfide bond</keyword>
<keyword id="KW-0328">Glycosyltransferase</keyword>
<keyword id="KW-0660">Purine salvage</keyword>
<keyword id="KW-1185">Reference proteome</keyword>
<keyword id="KW-0808">Transferase</keyword>
<accession>Q8U2I1</accession>
<comment type="function">
    <text evidence="1 2 3">Purine nucleoside phosphorylase which is highly specific for 6-oxopurine nucleosides. Cleaves guanosine or inosine to respective bases and sugar-1-phosphate molecules. Involved in purine salvage.</text>
</comment>
<comment type="catalytic activity">
    <reaction evidence="1 2 3">
        <text>a purine D-ribonucleoside + phosphate = a purine nucleobase + alpha-D-ribose 1-phosphate</text>
        <dbReference type="Rhea" id="RHEA:19805"/>
        <dbReference type="ChEBI" id="CHEBI:26386"/>
        <dbReference type="ChEBI" id="CHEBI:43474"/>
        <dbReference type="ChEBI" id="CHEBI:57720"/>
        <dbReference type="ChEBI" id="CHEBI:142355"/>
        <dbReference type="EC" id="2.4.2.1"/>
    </reaction>
</comment>
<comment type="catalytic activity">
    <reaction evidence="2">
        <text>guanosine + phosphate = alpha-D-ribose 1-phosphate + guanine</text>
        <dbReference type="Rhea" id="RHEA:13233"/>
        <dbReference type="ChEBI" id="CHEBI:16235"/>
        <dbReference type="ChEBI" id="CHEBI:16750"/>
        <dbReference type="ChEBI" id="CHEBI:43474"/>
        <dbReference type="ChEBI" id="CHEBI:57720"/>
        <dbReference type="EC" id="2.4.2.1"/>
    </reaction>
</comment>
<comment type="catalytic activity">
    <reaction evidence="2 3">
        <text>inosine + phosphate = alpha-D-ribose 1-phosphate + hypoxanthine</text>
        <dbReference type="Rhea" id="RHEA:27646"/>
        <dbReference type="ChEBI" id="CHEBI:17368"/>
        <dbReference type="ChEBI" id="CHEBI:17596"/>
        <dbReference type="ChEBI" id="CHEBI:43474"/>
        <dbReference type="ChEBI" id="CHEBI:57720"/>
        <dbReference type="EC" id="2.4.2.1"/>
    </reaction>
</comment>
<comment type="biophysicochemical properties">
    <kinetics>
        <KM evidence="2">322 uM for inosine</KM>
        <KM evidence="3">310 uM for inosine</KM>
        <KM evidence="2">122 uM for guanosine</KM>
        <KM evidence="3">1454 uM for adenosine</KM>
        <text evidence="2 3">kcat is 84 sec(-1) with inosine as substrate (PubMed:17419725). kcat is 150 sec(-1) with inosine as substrate (PubMed:21683167). kcat is 28 sec(-1) with guanosine as substrate (PubMed:17419725). kcat is 0.15 sec(-1) with adenosine as substrate (PubMed:21683167).</text>
    </kinetics>
    <temperatureDependence>
        <text evidence="2">Optimum temperature is 120 degrees Celsius. Thermostable up to 133 degrees Celsius.</text>
    </temperatureDependence>
</comment>
<comment type="pathway">
    <text evidence="1">Purine metabolism; purine nucleoside salvage.</text>
</comment>
<comment type="subunit">
    <text evidence="1 2">Homohexamer. Dimer of a homotrimer.</text>
</comment>
<comment type="miscellaneous">
    <text evidence="2 3">Although this enzyme belongs to the family of MTA phosphorylases based on sequence homology, it has been shown that conserved amino acid substitutions in the substrate binding pocket convert the substrate specificity of this enzyme from 6-aminopurines to 6-oxopurines. It seems that P.furiosus has developed a specific enzyme (PF0853) for the metabolism of 6-oxo-purines, next to the canonical MTA phosphorylase PF0016.</text>
</comment>
<comment type="similarity">
    <text evidence="1">Belongs to the PNP/MTAP phosphorylase family. MTAP subfamily.</text>
</comment>
<name>PNPH_PYRFU</name>
<proteinExistence type="evidence at protein level"/>
<sequence>MPRIAIVGGSGVYDFPAENKREETVKTPYGEVKITVGVVGDEEVAFLARHGKGHSIPPHKINYRANIWALYELGVERIIATSAVGSMNPEMKPGDFVILDQIIDFTVSRPRTFYDGEESPHERKFVAHVDFTEPYCPEIRKALITAARNLGLPYHPRGTYVCTEGPRFETAAEIRAYRILGGDVVGMTQCPEAILARELEMCYATVAIVTNYAAGMSGKKLTHSEVVELMQKKSEDIVKLILAAIPLIPKERRCGCKDALKGATG</sequence>
<protein>
    <recommendedName>
        <fullName evidence="1 5">6-oxopurine nucleoside phosphorylase</fullName>
        <ecNumber evidence="1 2 3">2.4.2.1</ecNumber>
    </recommendedName>
    <alternativeName>
        <fullName evidence="1 4">Purine nucleoside phosphorylase</fullName>
        <shortName evidence="1 4">PNP</shortName>
        <shortName evidence="4">PfPNP</shortName>
    </alternativeName>
</protein>
<organism>
    <name type="scientific">Pyrococcus furiosus (strain ATCC 43587 / DSM 3638 / JCM 8422 / Vc1)</name>
    <dbReference type="NCBI Taxonomy" id="186497"/>
    <lineage>
        <taxon>Archaea</taxon>
        <taxon>Methanobacteriati</taxon>
        <taxon>Methanobacteriota</taxon>
        <taxon>Thermococci</taxon>
        <taxon>Thermococcales</taxon>
        <taxon>Thermococcaceae</taxon>
        <taxon>Pyrococcus</taxon>
    </lineage>
</organism>
<feature type="initiator methionine" description="Removed" evidence="2">
    <location>
        <position position="1"/>
    </location>
</feature>
<feature type="chain" id="PRO_0000415086" description="6-oxopurine nucleoside phosphorylase">
    <location>
        <begin position="2"/>
        <end position="265"/>
    </location>
</feature>
<feature type="binding site" evidence="1">
    <location>
        <position position="10"/>
    </location>
    <ligand>
        <name>phosphate</name>
        <dbReference type="ChEBI" id="CHEBI:43474"/>
    </ligand>
</feature>
<feature type="binding site" evidence="1">
    <location>
        <begin position="49"/>
        <end position="50"/>
    </location>
    <ligand>
        <name>phosphate</name>
        <dbReference type="ChEBI" id="CHEBI:43474"/>
    </ligand>
</feature>
<feature type="binding site" evidence="1">
    <location>
        <begin position="82"/>
        <end position="83"/>
    </location>
    <ligand>
        <name>phosphate</name>
        <dbReference type="ChEBI" id="CHEBI:43474"/>
    </ligand>
</feature>
<feature type="binding site" evidence="1">
    <location>
        <position position="187"/>
    </location>
    <ligand>
        <name>substrate</name>
    </ligand>
</feature>
<feature type="binding site" evidence="1">
    <location>
        <position position="188"/>
    </location>
    <ligand>
        <name>phosphate</name>
        <dbReference type="ChEBI" id="CHEBI:43474"/>
    </ligand>
</feature>
<feature type="binding site" evidence="1">
    <location>
        <begin position="211"/>
        <end position="213"/>
    </location>
    <ligand>
        <name>substrate</name>
    </ligand>
</feature>
<feature type="site" description="Important for substrate specificity" evidence="1">
    <location>
        <position position="169"/>
    </location>
</feature>
<feature type="site" description="Important for substrate specificity" evidence="1">
    <location>
        <position position="223"/>
    </location>
</feature>
<feature type="disulfide bond" evidence="2">
    <location>
        <begin position="136"/>
        <end position="202"/>
    </location>
</feature>
<feature type="disulfide bond" evidence="2">
    <location>
        <begin position="162"/>
        <end position="190"/>
    </location>
</feature>
<feature type="disulfide bond" evidence="2">
    <location>
        <begin position="254"/>
        <end position="256"/>
    </location>
</feature>
<feature type="mutagenesis site" description="Decreases catalytic activity for insosine and allows the enzyme to phosphorolytically cleave MTA with a catalytic efficiency about 4-fold higher than for inosine; when associated with D-211, D-213 and A-223." evidence="3">
    <original>E</original>
    <variation>S</variation>
    <location>
        <position position="169"/>
    </location>
</feature>
<feature type="mutagenesis site" description="Decreases catalytic activity for insosine and allows the enzyme to phosphorolytically cleave MTA with a catalytic efficiency about 4-fold higher than for inosine; when associated with S-169, D-213 and A-223." evidence="3">
    <original>N</original>
    <variation>D</variation>
    <location>
        <position position="211"/>
    </location>
</feature>
<feature type="mutagenesis site" description="Decreases catalytic activity for insosine and allows the enzyme to phosphorolytically cleave MTA with a catalytic efficiency about 4-fold higher than for inosine; when associated with S-169, D-211 and A-223." evidence="3">
    <original>A</original>
    <variation>D</variation>
    <location>
        <position position="213"/>
    </location>
</feature>
<feature type="mutagenesis site" description="Decreases catalytic activity for insosine and allows the enzyme to phosphorolytically cleave MTA with a catalytic efficiency about 4-fold higher than for inosine; when associated with S-169, D-211 and D-213." evidence="3">
    <original>H</original>
    <variation>A</variation>
    <location>
        <position position="223"/>
    </location>
</feature>
<feature type="mutagenesis site" description="Fully active, but reduces thermodynamic and kinetic stability of the enzyme; when associated with S-256." evidence="2">
    <original>C</original>
    <variation>S</variation>
    <location>
        <position position="254"/>
    </location>
</feature>
<feature type="mutagenesis site" description="Fully active, but reduces thermodynamic and kinetic stability of the enzyme; when associated with S-254." evidence="2">
    <original>C</original>
    <variation>S</variation>
    <location>
        <position position="256"/>
    </location>
</feature>
<evidence type="ECO:0000255" key="1">
    <source>
        <dbReference type="HAMAP-Rule" id="MF_01963"/>
    </source>
</evidence>
<evidence type="ECO:0000269" key="2">
    <source>
    </source>
</evidence>
<evidence type="ECO:0000269" key="3">
    <source>
    </source>
</evidence>
<evidence type="ECO:0000303" key="4">
    <source>
    </source>
</evidence>
<evidence type="ECO:0000305" key="5"/>
<gene>
    <name type="ordered locus">PF0853</name>
</gene>
<dbReference type="EC" id="2.4.2.1" evidence="1 2 3"/>
<dbReference type="EMBL" id="AE009950">
    <property type="protein sequence ID" value="AAL80977.1"/>
    <property type="molecule type" value="Genomic_DNA"/>
</dbReference>
<dbReference type="SMR" id="Q8U2I1"/>
<dbReference type="STRING" id="186497.PF0853"/>
<dbReference type="PaxDb" id="186497-PF0853"/>
<dbReference type="KEGG" id="pfu:PF0853"/>
<dbReference type="PATRIC" id="fig|186497.12.peg.903"/>
<dbReference type="eggNOG" id="arCOG01327">
    <property type="taxonomic scope" value="Archaea"/>
</dbReference>
<dbReference type="HOGENOM" id="CLU_054456_0_2_2"/>
<dbReference type="OrthoDB" id="7681at2157"/>
<dbReference type="PhylomeDB" id="Q8U2I1"/>
<dbReference type="BRENDA" id="2.4.2.1">
    <property type="organism ID" value="5243"/>
</dbReference>
<dbReference type="UniPathway" id="UPA00606"/>
<dbReference type="Proteomes" id="UP000001013">
    <property type="component" value="Chromosome"/>
</dbReference>
<dbReference type="GO" id="GO:0005829">
    <property type="term" value="C:cytosol"/>
    <property type="evidence" value="ECO:0007669"/>
    <property type="project" value="TreeGrafter"/>
</dbReference>
<dbReference type="GO" id="GO:0047975">
    <property type="term" value="F:guanosine phosphorylase activity"/>
    <property type="evidence" value="ECO:0007669"/>
    <property type="project" value="RHEA"/>
</dbReference>
<dbReference type="GO" id="GO:0017061">
    <property type="term" value="F:S-methyl-5-thioadenosine phosphorylase activity"/>
    <property type="evidence" value="ECO:0007669"/>
    <property type="project" value="InterPro"/>
</dbReference>
<dbReference type="GO" id="GO:0019509">
    <property type="term" value="P:L-methionine salvage from methylthioadenosine"/>
    <property type="evidence" value="ECO:0007669"/>
    <property type="project" value="TreeGrafter"/>
</dbReference>
<dbReference type="GO" id="GO:0006166">
    <property type="term" value="P:purine ribonucleoside salvage"/>
    <property type="evidence" value="ECO:0007669"/>
    <property type="project" value="UniProtKB-UniRule"/>
</dbReference>
<dbReference type="CDD" id="cd09010">
    <property type="entry name" value="MTAP_SsMTAPII_like_MTIP"/>
    <property type="match status" value="1"/>
</dbReference>
<dbReference type="FunFam" id="3.40.50.1580:FF:000012">
    <property type="entry name" value="Probable 6-oxopurine nucleoside phosphorylase"/>
    <property type="match status" value="1"/>
</dbReference>
<dbReference type="Gene3D" id="3.40.50.1580">
    <property type="entry name" value="Nucleoside phosphorylase domain"/>
    <property type="match status" value="1"/>
</dbReference>
<dbReference type="HAMAP" id="MF_01963">
    <property type="entry name" value="MTAP"/>
    <property type="match status" value="1"/>
</dbReference>
<dbReference type="InterPro" id="IPR010044">
    <property type="entry name" value="MTAP"/>
</dbReference>
<dbReference type="InterPro" id="IPR000845">
    <property type="entry name" value="Nucleoside_phosphorylase_d"/>
</dbReference>
<dbReference type="InterPro" id="IPR035994">
    <property type="entry name" value="Nucleoside_phosphorylase_sf"/>
</dbReference>
<dbReference type="InterPro" id="IPR018099">
    <property type="entry name" value="Purine_phosphorylase-2_CS"/>
</dbReference>
<dbReference type="NCBIfam" id="TIGR01694">
    <property type="entry name" value="MTAP"/>
    <property type="match status" value="1"/>
</dbReference>
<dbReference type="NCBIfam" id="NF006599">
    <property type="entry name" value="PRK09136.1"/>
    <property type="match status" value="1"/>
</dbReference>
<dbReference type="PANTHER" id="PTHR42679">
    <property type="entry name" value="S-METHYL-5'-THIOADENOSINE PHOSPHORYLASE"/>
    <property type="match status" value="1"/>
</dbReference>
<dbReference type="PANTHER" id="PTHR42679:SF2">
    <property type="entry name" value="S-METHYL-5'-THIOADENOSINE PHOSPHORYLASE"/>
    <property type="match status" value="1"/>
</dbReference>
<dbReference type="Pfam" id="PF01048">
    <property type="entry name" value="PNP_UDP_1"/>
    <property type="match status" value="1"/>
</dbReference>
<dbReference type="SUPFAM" id="SSF53167">
    <property type="entry name" value="Purine and uridine phosphorylases"/>
    <property type="match status" value="1"/>
</dbReference>
<dbReference type="PROSITE" id="PS01240">
    <property type="entry name" value="PNP_MTAP_2"/>
    <property type="match status" value="1"/>
</dbReference>